<feature type="chain" id="PRO_0000186977" description="Uncharacterized protein aq_2168">
    <location>
        <begin position="1"/>
        <end position="469"/>
    </location>
</feature>
<feature type="coiled-coil region" evidence="1">
    <location>
        <begin position="11"/>
        <end position="65"/>
    </location>
</feature>
<keyword id="KW-0175">Coiled coil</keyword>
<keyword id="KW-1185">Reference proteome</keyword>
<proteinExistence type="predicted"/>
<organism>
    <name type="scientific">Aquifex aeolicus (strain VF5)</name>
    <dbReference type="NCBI Taxonomy" id="224324"/>
    <lineage>
        <taxon>Bacteria</taxon>
        <taxon>Pseudomonadati</taxon>
        <taxon>Aquificota</taxon>
        <taxon>Aquificia</taxon>
        <taxon>Aquificales</taxon>
        <taxon>Aquificaceae</taxon>
        <taxon>Aquifex</taxon>
    </lineage>
</organism>
<dbReference type="EMBL" id="AE000657">
    <property type="protein sequence ID" value="AAC07889.1"/>
    <property type="molecule type" value="Genomic_DNA"/>
</dbReference>
<dbReference type="PIR" id="B70486">
    <property type="entry name" value="B70486"/>
</dbReference>
<dbReference type="RefSeq" id="NP_214487.1">
    <property type="nucleotide sequence ID" value="NC_000918.1"/>
</dbReference>
<dbReference type="RefSeq" id="WP_010881423.1">
    <property type="nucleotide sequence ID" value="NC_000918.1"/>
</dbReference>
<dbReference type="SMR" id="O67918"/>
<dbReference type="STRING" id="224324.aq_2168"/>
<dbReference type="EnsemblBacteria" id="AAC07889">
    <property type="protein sequence ID" value="AAC07889"/>
    <property type="gene ID" value="aq_2168"/>
</dbReference>
<dbReference type="KEGG" id="aae:aq_2168"/>
<dbReference type="PATRIC" id="fig|224324.8.peg.1675"/>
<dbReference type="eggNOG" id="COG3746">
    <property type="taxonomic scope" value="Bacteria"/>
</dbReference>
<dbReference type="HOGENOM" id="CLU_038901_0_0_0"/>
<dbReference type="InParanoid" id="O67918"/>
<dbReference type="OrthoDB" id="9788733at2"/>
<dbReference type="Proteomes" id="UP000000798">
    <property type="component" value="Chromosome"/>
</dbReference>
<dbReference type="Gene3D" id="2.40.160.10">
    <property type="entry name" value="Porin"/>
    <property type="match status" value="1"/>
</dbReference>
<dbReference type="InterPro" id="IPR023614">
    <property type="entry name" value="Porin_dom_sf"/>
</dbReference>
<dbReference type="PANTHER" id="PTHR15398">
    <property type="entry name" value="BROMODOMAIN-CONTAINING PROTEIN 8"/>
    <property type="match status" value="1"/>
</dbReference>
<dbReference type="PANTHER" id="PTHR15398:SF4">
    <property type="entry name" value="BROMODOMAIN-CONTAINING PROTEIN 8 ISOFORM X1"/>
    <property type="match status" value="1"/>
</dbReference>
<dbReference type="SUPFAM" id="SSF56935">
    <property type="entry name" value="Porins"/>
    <property type="match status" value="1"/>
</dbReference>
<sequence length="469" mass="54326">MKKYVLLLSILFISVAFSQESVEDLKRLLEEYKKKIQEIERRLEELEKAKKEEEKKKEAVALKPTPADRTLKIRTKYEERLGAYQVSPFSQKAFLPDISLILDFSFVGRNKKDSELKELEIPALYHGHGGHEHGELNEKRGFNLNYAELFLYAPVDPYFDLYATIPFSEDGSTVEEAYAVTRGLPYGFQVKVGKFRSSFGRLNSQHPHVWEFANPPLVYKVFLGEGLIEKGVQVNWLAPVPFYLLLGAEVLQGENEMSFGTEGFSVNEDLRVPDTPKPNLYVGFLKTSFDVGNLSLLGGISYAYGRTRINHLEDEEEPHAFAGRTKIYGLDLTAKYFIDSYRYLAFQGEYLYRRQEGTKYTPESTSPLTKKQGGLYAQVVWKFDRRWRTGIQYNLINKNELKVNGIKKDLPDDLSAYYWMLEFNPTEFSRIRLQLGQNRAFYKEDKRKTINEFIFQFNFVIGAHTSHPF</sequence>
<gene>
    <name type="ordered locus">aq_2168</name>
</gene>
<evidence type="ECO:0000255" key="1"/>
<name>Y2168_AQUAE</name>
<protein>
    <recommendedName>
        <fullName>Uncharacterized protein aq_2168</fullName>
    </recommendedName>
</protein>
<accession>O67918</accession>
<reference key="1">
    <citation type="journal article" date="1998" name="Nature">
        <title>The complete genome of the hyperthermophilic bacterium Aquifex aeolicus.</title>
        <authorList>
            <person name="Deckert G."/>
            <person name="Warren P.V."/>
            <person name="Gaasterland T."/>
            <person name="Young W.G."/>
            <person name="Lenox A.L."/>
            <person name="Graham D.E."/>
            <person name="Overbeek R."/>
            <person name="Snead M.A."/>
            <person name="Keller M."/>
            <person name="Aujay M."/>
            <person name="Huber R."/>
            <person name="Feldman R.A."/>
            <person name="Short J.M."/>
            <person name="Olsen G.J."/>
            <person name="Swanson R.V."/>
        </authorList>
    </citation>
    <scope>NUCLEOTIDE SEQUENCE [LARGE SCALE GENOMIC DNA]</scope>
    <source>
        <strain>VF5</strain>
    </source>
</reference>